<gene>
    <name type="primary">RPL2</name>
</gene>
<protein>
    <recommendedName>
        <fullName evidence="3">Large ribosomal subunit protein uL2m</fullName>
    </recommendedName>
    <alternativeName>
        <fullName>60S ribosomal protein L2, mitochondrial</fullName>
    </alternativeName>
</protein>
<feature type="chain" id="PRO_0000355970" description="Large ribosomal subunit protein uL2m">
    <location>
        <begin position="1"/>
        <end position="502"/>
    </location>
</feature>
<feature type="region of interest" description="Disordered" evidence="2">
    <location>
        <begin position="458"/>
        <end position="502"/>
    </location>
</feature>
<feature type="compositionally biased region" description="Basic and acidic residues" evidence="2">
    <location>
        <begin position="463"/>
        <end position="473"/>
    </location>
</feature>
<feature type="compositionally biased region" description="Gly residues" evidence="2">
    <location>
        <begin position="493"/>
        <end position="502"/>
    </location>
</feature>
<dbReference type="EMBL" id="DQ167399">
    <property type="protein sequence ID" value="AAZ99247.1"/>
    <property type="status" value="ALT_SEQ"/>
    <property type="molecule type" value="Genomic_DNA"/>
</dbReference>
<dbReference type="RefSeq" id="YP_514664.1">
    <property type="nucleotide sequence ID" value="NC_007886.1"/>
</dbReference>
<dbReference type="GeneID" id="3950683"/>
<dbReference type="GO" id="GO:0005762">
    <property type="term" value="C:mitochondrial large ribosomal subunit"/>
    <property type="evidence" value="ECO:0007669"/>
    <property type="project" value="TreeGrafter"/>
</dbReference>
<dbReference type="GO" id="GO:0005739">
    <property type="term" value="C:mitochondrion"/>
    <property type="evidence" value="ECO:0000305"/>
    <property type="project" value="Gramene"/>
</dbReference>
<dbReference type="GO" id="GO:0003723">
    <property type="term" value="F:RNA binding"/>
    <property type="evidence" value="ECO:0007669"/>
    <property type="project" value="TreeGrafter"/>
</dbReference>
<dbReference type="GO" id="GO:0003735">
    <property type="term" value="F:structural constituent of ribosome"/>
    <property type="evidence" value="ECO:0007669"/>
    <property type="project" value="InterPro"/>
</dbReference>
<dbReference type="GO" id="GO:0032543">
    <property type="term" value="P:mitochondrial translation"/>
    <property type="evidence" value="ECO:0007669"/>
    <property type="project" value="TreeGrafter"/>
</dbReference>
<dbReference type="FunFam" id="2.30.30.30:FF:000001">
    <property type="entry name" value="50S ribosomal protein L2"/>
    <property type="match status" value="1"/>
</dbReference>
<dbReference type="FunFam" id="4.10.950.10:FF:000001">
    <property type="entry name" value="50S ribosomal protein L2"/>
    <property type="match status" value="1"/>
</dbReference>
<dbReference type="FunFam" id="2.40.50.140:FF:000254">
    <property type="entry name" value="Ribosomal protein L2 mitochondrion"/>
    <property type="match status" value="1"/>
</dbReference>
<dbReference type="Gene3D" id="2.30.30.30">
    <property type="match status" value="1"/>
</dbReference>
<dbReference type="Gene3D" id="2.40.50.140">
    <property type="entry name" value="Nucleic acid-binding proteins"/>
    <property type="match status" value="1"/>
</dbReference>
<dbReference type="Gene3D" id="4.10.950.10">
    <property type="entry name" value="Ribosomal protein L2, domain 3"/>
    <property type="match status" value="1"/>
</dbReference>
<dbReference type="InterPro" id="IPR012340">
    <property type="entry name" value="NA-bd_OB-fold"/>
</dbReference>
<dbReference type="InterPro" id="IPR014722">
    <property type="entry name" value="Rib_uL2_dom2"/>
</dbReference>
<dbReference type="InterPro" id="IPR002171">
    <property type="entry name" value="Ribosomal_uL2"/>
</dbReference>
<dbReference type="InterPro" id="IPR022669">
    <property type="entry name" value="Ribosomal_uL2_C"/>
</dbReference>
<dbReference type="InterPro" id="IPR022671">
    <property type="entry name" value="Ribosomal_uL2_CS"/>
</dbReference>
<dbReference type="InterPro" id="IPR014726">
    <property type="entry name" value="Ribosomal_uL2_dom3"/>
</dbReference>
<dbReference type="InterPro" id="IPR022666">
    <property type="entry name" value="Ribosomal_uL2_RNA-bd_dom"/>
</dbReference>
<dbReference type="InterPro" id="IPR008991">
    <property type="entry name" value="Translation_prot_SH3-like_sf"/>
</dbReference>
<dbReference type="PANTHER" id="PTHR13691:SF44">
    <property type="entry name" value="LARGE RIBOSOMAL SUBUNIT PROTEIN UL2MZ-RELATED"/>
    <property type="match status" value="1"/>
</dbReference>
<dbReference type="PANTHER" id="PTHR13691">
    <property type="entry name" value="RIBOSOMAL PROTEIN L2"/>
    <property type="match status" value="1"/>
</dbReference>
<dbReference type="Pfam" id="PF00181">
    <property type="entry name" value="Ribosomal_L2"/>
    <property type="match status" value="1"/>
</dbReference>
<dbReference type="Pfam" id="PF03947">
    <property type="entry name" value="Ribosomal_L2_C"/>
    <property type="match status" value="1"/>
</dbReference>
<dbReference type="SMART" id="SM01383">
    <property type="entry name" value="Ribosomal_L2"/>
    <property type="match status" value="1"/>
</dbReference>
<dbReference type="SMART" id="SM01382">
    <property type="entry name" value="Ribosomal_L2_C"/>
    <property type="match status" value="1"/>
</dbReference>
<dbReference type="SUPFAM" id="SSF50249">
    <property type="entry name" value="Nucleic acid-binding proteins"/>
    <property type="match status" value="1"/>
</dbReference>
<dbReference type="SUPFAM" id="SSF50104">
    <property type="entry name" value="Translation proteins SH3-like domain"/>
    <property type="match status" value="1"/>
</dbReference>
<dbReference type="PROSITE" id="PS00467">
    <property type="entry name" value="RIBOSOMAL_L2"/>
    <property type="match status" value="1"/>
</dbReference>
<evidence type="ECO:0000250" key="1"/>
<evidence type="ECO:0000256" key="2">
    <source>
        <dbReference type="SAM" id="MobiDB-lite"/>
    </source>
</evidence>
<evidence type="ECO:0000305" key="3"/>
<accession>Q2F969</accession>
<reference key="1">
    <citation type="journal article" date="2006" name="Plant Physiol.">
        <title>The rice mitochondrial genomes and their variations.</title>
        <authorList>
            <person name="Tian X."/>
            <person name="Zheng J."/>
            <person name="Hu S."/>
            <person name="Yu J."/>
        </authorList>
    </citation>
    <scope>NUCLEOTIDE SEQUENCE [GENOMIC DNA]</scope>
    <source>
        <strain>cv. 93-11</strain>
    </source>
</reference>
<geneLocation type="mitochondrion"/>
<comment type="subcellular location">
    <subcellularLocation>
        <location>Mitochondrion</location>
    </subcellularLocation>
</comment>
<comment type="RNA editing">
    <location>
        <position position="404" evidence="1"/>
    </location>
</comment>
<comment type="similarity">
    <text evidence="3">Belongs to the universal ribosomal protein uL2 family.</text>
</comment>
<name>RM02_ORYSI</name>
<sequence>MRQSIKGRALRHFTLSTGKSAGRNSSGRITVFHRGGGSKRLQRKIDLKRSTSSIGIVERIEYDPNRSSRIALVRWIEGVLPGRQRKFKTIEEFALPRKILESTTATIFCLFSFSSLSSPLAQGETASLSFGSSLGFPRIAVAGAKPAFFAERMREKKIGKKTFSLCEIRKWRTHCVLWAHRIKRKAALSWQSLRQQKTLELVGAAEHNESKLKADQGSLLPRQVLAYALCSGRPSYLHASRSFYKALLPVEASRFGSLPAKPPIGEGPKDGAYKVDRAPVTYILASHQLEAGNMVINCDCSKPSKSGFLRPAQNAHTYLRFQELGRTVNKGRVEGGSQLAASWPRPPAYRHEILDLNSKVGNSIPLADIRMGTWVHDIECHPGQGAKLARAAGTYAKIIKEPASQCLVRLPSGVEKLIDSRCRATIGIVSNPNHGARKLRKAGQSRWSGRRPIVRGVAMNPVDHPHGGGEGRTKGGRPSVSPWGKPTKAGFRAGVGVGKRRI</sequence>
<keyword id="KW-0496">Mitochondrion</keyword>
<keyword id="KW-0687">Ribonucleoprotein</keyword>
<keyword id="KW-0689">Ribosomal protein</keyword>
<keyword id="KW-0691">RNA editing</keyword>
<proteinExistence type="inferred from homology"/>
<organism>
    <name type="scientific">Oryza sativa subsp. indica</name>
    <name type="common">Rice</name>
    <dbReference type="NCBI Taxonomy" id="39946"/>
    <lineage>
        <taxon>Eukaryota</taxon>
        <taxon>Viridiplantae</taxon>
        <taxon>Streptophyta</taxon>
        <taxon>Embryophyta</taxon>
        <taxon>Tracheophyta</taxon>
        <taxon>Spermatophyta</taxon>
        <taxon>Magnoliopsida</taxon>
        <taxon>Liliopsida</taxon>
        <taxon>Poales</taxon>
        <taxon>Poaceae</taxon>
        <taxon>BOP clade</taxon>
        <taxon>Oryzoideae</taxon>
        <taxon>Oryzeae</taxon>
        <taxon>Oryzinae</taxon>
        <taxon>Oryza</taxon>
        <taxon>Oryza sativa</taxon>
    </lineage>
</organism>